<evidence type="ECO:0000269" key="1">
    <source>
    </source>
</evidence>
<evidence type="ECO:0007829" key="2">
    <source>
        <dbReference type="PDB" id="1MHY"/>
    </source>
</evidence>
<accession>P27355</accession>
<reference key="1">
    <citation type="journal article" date="1991" name="Mol. Microbiol.">
        <title>Molecular analysis of the methane monooxygenase (MMO) gene cluster of Methylosinus trichosporium OB3b.</title>
        <authorList>
            <person name="Cardy D.L.N."/>
            <person name="Laidler V."/>
            <person name="Salmond G.P.C."/>
            <person name="Murrell J.C."/>
        </authorList>
    </citation>
    <scope>NUCLEOTIDE SEQUENCE [GENOMIC DNA]</scope>
    <source>
        <strain>ATCC 35070 / NCIMB 11131 / ACM 3311 / OB3b</strain>
    </source>
</reference>
<reference key="2">
    <citation type="journal article" date="1991" name="J. Biol. Chem.">
        <title>Complex formation between the protein components of methane monooxygenase from Methylosinus trichosporium OB3b. Identification of sites of component interaction.</title>
        <authorList>
            <person name="Fox B.G."/>
            <person name="Liu Y."/>
            <person name="Dege J.E."/>
            <person name="Lipscomb J.D."/>
        </authorList>
    </citation>
    <scope>PROTEIN SEQUENCE OF 2-12</scope>
</reference>
<dbReference type="EC" id="1.14.13.25"/>
<dbReference type="EMBL" id="X55394">
    <property type="protein sequence ID" value="CAA39071.1"/>
    <property type="molecule type" value="Genomic_DNA"/>
</dbReference>
<dbReference type="PIR" id="S15210">
    <property type="entry name" value="C39049"/>
</dbReference>
<dbReference type="PDB" id="1MHY">
    <property type="method" value="X-ray"/>
    <property type="resolution" value="2.00 A"/>
    <property type="chains" value="G=1-169"/>
</dbReference>
<dbReference type="PDB" id="1MHZ">
    <property type="method" value="X-ray"/>
    <property type="resolution" value="2.70 A"/>
    <property type="chains" value="G=1-169"/>
</dbReference>
<dbReference type="PDBsum" id="1MHY"/>
<dbReference type="PDBsum" id="1MHZ"/>
<dbReference type="SMR" id="P27355"/>
<dbReference type="BioCyc" id="MetaCyc:MONOMER-3869"/>
<dbReference type="BRENDA" id="1.14.13.25">
    <property type="organism ID" value="3322"/>
</dbReference>
<dbReference type="EvolutionaryTrace" id="P27355"/>
<dbReference type="GO" id="GO:0015049">
    <property type="term" value="F:methane monooxygenase [NAD(P)H] activity"/>
    <property type="evidence" value="ECO:0007669"/>
    <property type="project" value="UniProtKB-EC"/>
</dbReference>
<dbReference type="GO" id="GO:0015947">
    <property type="term" value="P:methane metabolic process"/>
    <property type="evidence" value="ECO:0007669"/>
    <property type="project" value="InterPro"/>
</dbReference>
<dbReference type="GO" id="GO:0006730">
    <property type="term" value="P:one-carbon metabolic process"/>
    <property type="evidence" value="ECO:0007669"/>
    <property type="project" value="UniProtKB-KW"/>
</dbReference>
<dbReference type="Gene3D" id="1.20.1280.10">
    <property type="entry name" value="Methane monooxygenase, gamma chain, domain 1"/>
    <property type="match status" value="1"/>
</dbReference>
<dbReference type="Gene3D" id="1.20.1280.30">
    <property type="entry name" value="Methane monooxygenase, gamma chain, domain 2"/>
    <property type="match status" value="1"/>
</dbReference>
<dbReference type="InterPro" id="IPR004222">
    <property type="entry name" value="Me_mOase_g"/>
</dbReference>
<dbReference type="InterPro" id="IPR015952">
    <property type="entry name" value="Me_mOase_g_dom1"/>
</dbReference>
<dbReference type="InterPro" id="IPR015953">
    <property type="entry name" value="Me_mOase_g_dom2"/>
</dbReference>
<dbReference type="InterPro" id="IPR036123">
    <property type="entry name" value="Me_mOase_sf_g"/>
</dbReference>
<dbReference type="InterPro" id="IPR054953">
    <property type="entry name" value="MethMoxGammaMmoZ"/>
</dbReference>
<dbReference type="NCBIfam" id="NF045805">
    <property type="entry name" value="MethMoxGammaMmoZ"/>
    <property type="match status" value="1"/>
</dbReference>
<dbReference type="Pfam" id="PF02964">
    <property type="entry name" value="MeMO_Hyd_G"/>
    <property type="match status" value="1"/>
</dbReference>
<dbReference type="PIRSF" id="PIRSF018503">
    <property type="entry name" value="Me_mOase_g"/>
    <property type="match status" value="1"/>
</dbReference>
<dbReference type="SUPFAM" id="SSF47152">
    <property type="entry name" value="Methane monooxygenase hydrolase, gamma subunit"/>
    <property type="match status" value="1"/>
</dbReference>
<feature type="initiator methionine" description="Removed" evidence="1">
    <location>
        <position position="1"/>
    </location>
</feature>
<feature type="chain" id="PRO_0000096410" description="Methane monooxygenase component A gamma chain">
    <location>
        <begin position="2"/>
        <end position="169"/>
    </location>
</feature>
<feature type="strand" evidence="2">
    <location>
        <begin position="7"/>
        <end position="9"/>
    </location>
</feature>
<feature type="helix" evidence="2">
    <location>
        <begin position="11"/>
        <end position="21"/>
    </location>
</feature>
<feature type="helix" evidence="2">
    <location>
        <begin position="26"/>
        <end position="40"/>
    </location>
</feature>
<feature type="turn" evidence="2">
    <location>
        <begin position="49"/>
        <end position="53"/>
    </location>
</feature>
<feature type="helix" evidence="2">
    <location>
        <begin position="54"/>
        <end position="72"/>
    </location>
</feature>
<feature type="helix" evidence="2">
    <location>
        <begin position="75"/>
        <end position="80"/>
    </location>
</feature>
<feature type="helix" evidence="2">
    <location>
        <begin position="88"/>
        <end position="100"/>
    </location>
</feature>
<feature type="helix" evidence="2">
    <location>
        <begin position="105"/>
        <end position="119"/>
    </location>
</feature>
<feature type="turn" evidence="2">
    <location>
        <begin position="120"/>
        <end position="123"/>
    </location>
</feature>
<feature type="helix" evidence="2">
    <location>
        <begin position="126"/>
        <end position="144"/>
    </location>
</feature>
<feature type="turn" evidence="2">
    <location>
        <begin position="145"/>
        <end position="149"/>
    </location>
</feature>
<feature type="helix" evidence="2">
    <location>
        <begin position="153"/>
        <end position="160"/>
    </location>
</feature>
<feature type="strand" evidence="2">
    <location>
        <begin position="163"/>
        <end position="167"/>
    </location>
</feature>
<comment type="function">
    <text>Responsible for the initial oxygenation of methane to methanol in methanotrophs. It also catalyzes the monohydroxylation of a variety of unactivated alkenes, alicyclic, aromatic and heterocyclic compounds.</text>
</comment>
<comment type="catalytic activity">
    <reaction>
        <text>methane + NADH + O2 + H(+) = methanol + NAD(+) + H2O</text>
        <dbReference type="Rhea" id="RHEA:13637"/>
        <dbReference type="ChEBI" id="CHEBI:15377"/>
        <dbReference type="ChEBI" id="CHEBI:15378"/>
        <dbReference type="ChEBI" id="CHEBI:15379"/>
        <dbReference type="ChEBI" id="CHEBI:16183"/>
        <dbReference type="ChEBI" id="CHEBI:17790"/>
        <dbReference type="ChEBI" id="CHEBI:57540"/>
        <dbReference type="ChEBI" id="CHEBI:57945"/>
        <dbReference type="EC" id="1.14.13.25"/>
    </reaction>
</comment>
<comment type="catalytic activity">
    <reaction>
        <text>methane + NADPH + O2 + H(+) = methanol + NADP(+) + H2O</text>
        <dbReference type="Rhea" id="RHEA:13641"/>
        <dbReference type="ChEBI" id="CHEBI:15377"/>
        <dbReference type="ChEBI" id="CHEBI:15378"/>
        <dbReference type="ChEBI" id="CHEBI:15379"/>
        <dbReference type="ChEBI" id="CHEBI:16183"/>
        <dbReference type="ChEBI" id="CHEBI:17790"/>
        <dbReference type="ChEBI" id="CHEBI:57783"/>
        <dbReference type="ChEBI" id="CHEBI:58349"/>
        <dbReference type="EC" id="1.14.13.25"/>
    </reaction>
</comment>
<comment type="subunit">
    <text>M.trichosporium has two forms of methane monooxygenase, a soluble and a membrane-bound type. The soluble type consists of four components (A to D): protein A, comprising three chains, in an alpha-2, beta-2, gamma-2 configuration, is a nonheme iron protein containing an unusual mu-hydroxo bridge structure at its active site and interacts with both oxygen and methane.</text>
</comment>
<protein>
    <recommendedName>
        <fullName>Methane monooxygenase component A gamma chain</fullName>
        <ecNumber>1.14.13.25</ecNumber>
    </recommendedName>
    <alternativeName>
        <fullName>Methane hydroxylase</fullName>
    </alternativeName>
</protein>
<organism>
    <name type="scientific">Methylosinus trichosporium</name>
    <dbReference type="NCBI Taxonomy" id="426"/>
    <lineage>
        <taxon>Bacteria</taxon>
        <taxon>Pseudomonadati</taxon>
        <taxon>Pseudomonadota</taxon>
        <taxon>Alphaproteobacteria</taxon>
        <taxon>Hyphomicrobiales</taxon>
        <taxon>Methylocystaceae</taxon>
        <taxon>Methylosinus</taxon>
    </lineage>
</organism>
<keyword id="KW-0002">3D-structure</keyword>
<keyword id="KW-0903">Direct protein sequencing</keyword>
<keyword id="KW-0503">Monooxygenase</keyword>
<keyword id="KW-0521">NADP</keyword>
<keyword id="KW-0554">One-carbon metabolism</keyword>
<keyword id="KW-0560">Oxidoreductase</keyword>
<proteinExistence type="evidence at protein level"/>
<sequence length="169" mass="19326">MAKREPIHDNSIRTEWEAKIAKLTSVDQATKFIQDFRLAYTSPFRKSYDIDVDYQYIERKIEEKLSVLKTEKLPVADLITKATTGEDRAAVEATWIAKIKAAKSKYEADGIHIEFRQLYKPPVLPVNVFLRTDAALGTVLMEIRNTDYYGTPLEGLRKEPGVKVLHLQA</sequence>
<gene>
    <name type="primary">mmoZ</name>
</gene>
<name>MEMG_METTR</name>